<protein>
    <recommendedName>
        <fullName>DNA-directed RNA polymerase 19 kDa subunit</fullName>
        <ecNumber>2.7.7.6</ecNumber>
    </recommendedName>
</protein>
<organismHost>
    <name type="scientific">Homo sapiens</name>
    <name type="common">Human</name>
    <dbReference type="NCBI Taxonomy" id="9606"/>
</organismHost>
<accession>Q76ZQ8</accession>
<feature type="chain" id="PRO_0000099145" description="DNA-directed RNA polymerase 19 kDa subunit">
    <location>
        <begin position="1"/>
        <end position="164"/>
    </location>
</feature>
<feature type="region of interest" description="Disordered" evidence="1">
    <location>
        <begin position="1"/>
        <end position="39"/>
    </location>
</feature>
<feature type="compositionally biased region" description="Acidic residues" evidence="1">
    <location>
        <begin position="1"/>
        <end position="35"/>
    </location>
</feature>
<feature type="helix" evidence="4">
    <location>
        <begin position="63"/>
        <end position="74"/>
    </location>
</feature>
<feature type="helix" evidence="4">
    <location>
        <begin position="79"/>
        <end position="94"/>
    </location>
</feature>
<feature type="helix" evidence="4">
    <location>
        <begin position="108"/>
        <end position="110"/>
    </location>
</feature>
<feature type="helix" evidence="4">
    <location>
        <begin position="113"/>
        <end position="123"/>
    </location>
</feature>
<feature type="strand" evidence="4">
    <location>
        <begin position="128"/>
        <end position="132"/>
    </location>
</feature>
<feature type="strand" evidence="4">
    <location>
        <begin position="135"/>
        <end position="137"/>
    </location>
</feature>
<feature type="helix" evidence="4">
    <location>
        <begin position="144"/>
        <end position="160"/>
    </location>
</feature>
<name>RP19_VACCA</name>
<sequence>MADTDDIIDYESDDLTEYEDDEEEEEDGESLETSDIDPKSSYKIVESASTHIEDAHSNLKHIGNHISALKRRYTRRISLFEIAGIIAESYNLLQRGRLPLVSEFSDETMKQNMLHVIIQEIEEGSCPIVIEKNGELLSVNDFDKDGLKFHLDYIIKIWKLQKRY</sequence>
<dbReference type="EC" id="2.7.7.6"/>
<dbReference type="EMBL" id="U94848">
    <property type="protein sequence ID" value="AAB96519.1"/>
    <property type="molecule type" value="Genomic_DNA"/>
</dbReference>
<dbReference type="EMBL" id="AY603355">
    <property type="protein sequence ID" value="AAT10514.1"/>
    <property type="molecule type" value="Genomic_DNA"/>
</dbReference>
<dbReference type="RefSeq" id="YP_233006.1">
    <property type="nucleotide sequence ID" value="NC_006998.1"/>
</dbReference>
<dbReference type="PDB" id="6RIE">
    <property type="method" value="EM"/>
    <property type="resolution" value="3.10 A"/>
    <property type="chains" value="F=1-164"/>
</dbReference>
<dbReference type="PDBsum" id="6RIE"/>
<dbReference type="SMR" id="Q76ZQ8"/>
<dbReference type="DNASU" id="3707522"/>
<dbReference type="GeneID" id="3707522"/>
<dbReference type="KEGG" id="vg:3707522"/>
<dbReference type="Proteomes" id="UP000159908">
    <property type="component" value="Segment"/>
</dbReference>
<dbReference type="Proteomes" id="UP000172909">
    <property type="component" value="Segment"/>
</dbReference>
<dbReference type="GO" id="GO:0000428">
    <property type="term" value="C:DNA-directed RNA polymerase complex"/>
    <property type="evidence" value="ECO:0007669"/>
    <property type="project" value="UniProtKB-KW"/>
</dbReference>
<dbReference type="GO" id="GO:0044423">
    <property type="term" value="C:virion component"/>
    <property type="evidence" value="ECO:0007669"/>
    <property type="project" value="UniProtKB-KW"/>
</dbReference>
<dbReference type="GO" id="GO:0003677">
    <property type="term" value="F:DNA binding"/>
    <property type="evidence" value="ECO:0007669"/>
    <property type="project" value="InterPro"/>
</dbReference>
<dbReference type="GO" id="GO:0003899">
    <property type="term" value="F:DNA-directed RNA polymerase activity"/>
    <property type="evidence" value="ECO:0007669"/>
    <property type="project" value="UniProtKB-EC"/>
</dbReference>
<dbReference type="GO" id="GO:0006351">
    <property type="term" value="P:DNA-templated transcription"/>
    <property type="evidence" value="ECO:0007669"/>
    <property type="project" value="InterPro"/>
</dbReference>
<dbReference type="Gene3D" id="3.90.940.10">
    <property type="match status" value="1"/>
</dbReference>
<dbReference type="InterPro" id="IPR007984">
    <property type="entry name" value="DNA-dir_RNA_Pol_19kDa_poxvir"/>
</dbReference>
<dbReference type="InterPro" id="IPR036161">
    <property type="entry name" value="RPB6/omega-like_sf"/>
</dbReference>
<dbReference type="Pfam" id="PF05320">
    <property type="entry name" value="Pox_RNA_Pol_19"/>
    <property type="match status" value="1"/>
</dbReference>
<dbReference type="PIRSF" id="PIRSF000743">
    <property type="entry name" value="RPO19"/>
    <property type="match status" value="1"/>
</dbReference>
<keyword id="KW-0002">3D-structure</keyword>
<keyword id="KW-0240">DNA-directed RNA polymerase</keyword>
<keyword id="KW-0244">Early protein</keyword>
<keyword id="KW-0548">Nucleotidyltransferase</keyword>
<keyword id="KW-0804">Transcription</keyword>
<keyword id="KW-0808">Transferase</keyword>
<keyword id="KW-0946">Virion</keyword>
<proteinExistence type="evidence at protein level"/>
<gene>
    <name type="primary">OPG131</name>
    <name type="synonym">RPO19</name>
    <name type="ordered locus">MVA116R</name>
    <name type="ordered locus">ACAM3000_MVA_116</name>
    <name type="ORF">A5R</name>
</gene>
<organism>
    <name type="scientific">Vaccinia virus (strain Ankara)</name>
    <name type="common">VACV</name>
    <dbReference type="NCBI Taxonomy" id="126794"/>
    <lineage>
        <taxon>Viruses</taxon>
        <taxon>Varidnaviria</taxon>
        <taxon>Bamfordvirae</taxon>
        <taxon>Nucleocytoviricota</taxon>
        <taxon>Pokkesviricetes</taxon>
        <taxon>Chitovirales</taxon>
        <taxon>Poxviridae</taxon>
        <taxon>Chordopoxvirinae</taxon>
        <taxon>Orthopoxvirus</taxon>
        <taxon>Vaccinia virus</taxon>
    </lineage>
</organism>
<reference key="1">
    <citation type="journal article" date="1998" name="Virology">
        <title>The complete genomic sequence of the modified vaccinia Ankara strain: comparison with other orthopoxviruses.</title>
        <authorList>
            <person name="Antoine G."/>
            <person name="Scheiflinger F."/>
            <person name="Dorner F."/>
            <person name="Falkner F.G."/>
        </authorList>
    </citation>
    <scope>NUCLEOTIDE SEQUENCE [LARGE SCALE GENOMIC DNA]</scope>
</reference>
<reference key="2">
    <citation type="submission" date="2004-04" db="EMBL/GenBank/DDBJ databases">
        <authorList>
            <person name="Esposito J.J."/>
            <person name="Frace M."/>
            <person name="Sammons S.A."/>
            <person name="Olsen-Rasmussen M.S."/>
            <person name="Osborne J."/>
            <person name="Khristova M."/>
            <person name="Wohlhueter R.M."/>
        </authorList>
    </citation>
    <scope>NUCLEOTIDE SEQUENCE [LARGE SCALE GENOMIC DNA]</scope>
    <source>
        <strain>Isolate Acambis 3000</strain>
    </source>
</reference>
<reference key="3">
    <citation type="journal article" date="2003" name="J. Gen. Virol.">
        <title>Vaccinia virus transcription.</title>
        <authorList>
            <person name="Broyles S.S."/>
        </authorList>
    </citation>
    <scope>REVIEW</scope>
</reference>
<reference key="4">
    <citation type="journal article" date="2019" name="Cell">
        <title>Structural Basis of Poxvirus Transcription: Transcribing and Capping Vaccinia Complexes.</title>
        <authorList>
            <person name="Hillen H.S."/>
            <person name="Bartuli J."/>
            <person name="Grimm C."/>
            <person name="Dienemann C."/>
            <person name="Bedenk K."/>
            <person name="Szalay A.A."/>
            <person name="Fischer U."/>
            <person name="Cramer P."/>
        </authorList>
    </citation>
    <scope>STRUCTURE BY ELECTRON MICROSCOPY (3.10 ANGSTROMS) IN COMPLEX WITH OPG66; OPG90; OPG103; OPG105; OPG131; OPG151 AND OPG156</scope>
    <scope>FUNCTION</scope>
</reference>
<comment type="function">
    <text evidence="2">Part of the DNA-dependent RNA polymerase which catalyzes the transcription of viral DNA into RNA using the four ribonucleoside triphosphates as substrates. Responsible for the transcription of early, intermediate and late genes. DNA-dependent RNA polymerase associates with the early transcription factor (ETF), itself composed of OPG118 and OPG133, thereby allowing the early genes transcription. Late transcription, and probably also intermediate transcription, require newly synthesized RNA polymerase.</text>
</comment>
<comment type="catalytic activity">
    <reaction>
        <text>RNA(n) + a ribonucleoside 5'-triphosphate = RNA(n+1) + diphosphate</text>
        <dbReference type="Rhea" id="RHEA:21248"/>
        <dbReference type="Rhea" id="RHEA-COMP:14527"/>
        <dbReference type="Rhea" id="RHEA-COMP:17342"/>
        <dbReference type="ChEBI" id="CHEBI:33019"/>
        <dbReference type="ChEBI" id="CHEBI:61557"/>
        <dbReference type="ChEBI" id="CHEBI:140395"/>
        <dbReference type="EC" id="2.7.7.6"/>
    </reaction>
</comment>
<comment type="subunit">
    <text evidence="2">The DNA-dependent RNA polymerase used for intermediate and late genes expression consists of eight subunits Rpo30/OPG66, Rpo7/OPG90, Rpo22/OPG103, Rpo147/OPG105, Rpo18/OPG119, Rpo19/OPG131, Rpo132/OPG151 and Rpo35/OPG156 (PubMed:31835031). The same holoenzyme, with the addition of the transcription-specificity factor OPG109, is used for early gene expression.</text>
</comment>
<comment type="subcellular location">
    <subcellularLocation>
        <location evidence="3">Virion</location>
    </subcellularLocation>
    <text>All the enzymes and other proteins required to synthesize early mRNAs are packaged within the virion core along with the DNA genome. This is necessary because viral early mRNAs are synthesized within minutes after virus entry into the cell and are extruded through pores in the core particle.</text>
</comment>
<comment type="induction">
    <text>Expressed in the early phase of the viral replicative cycle. Expression seems to continue throughout virus infection.</text>
</comment>
<comment type="similarity">
    <text evidence="3">Belongs to the poxviridae DNA-directed RNA polymerase 19 kDa subunit family.</text>
</comment>
<evidence type="ECO:0000256" key="1">
    <source>
        <dbReference type="SAM" id="MobiDB-lite"/>
    </source>
</evidence>
<evidence type="ECO:0000269" key="2">
    <source>
    </source>
</evidence>
<evidence type="ECO:0000305" key="3"/>
<evidence type="ECO:0007829" key="4">
    <source>
        <dbReference type="PDB" id="6RIE"/>
    </source>
</evidence>